<comment type="function">
    <text evidence="1">Catalyzes the formation of a hydroxyacyl-CoA by addition of water on enoyl-CoA. Also exhibits 3-hydroxyacyl-CoA epimerase and 3-hydroxyacyl-CoA dehydrogenase activities.</text>
</comment>
<comment type="catalytic activity">
    <reaction evidence="1">
        <text>a (3S)-3-hydroxyacyl-CoA = a (2E)-enoyl-CoA + H2O</text>
        <dbReference type="Rhea" id="RHEA:16105"/>
        <dbReference type="ChEBI" id="CHEBI:15377"/>
        <dbReference type="ChEBI" id="CHEBI:57318"/>
        <dbReference type="ChEBI" id="CHEBI:58856"/>
        <dbReference type="EC" id="4.2.1.17"/>
    </reaction>
</comment>
<comment type="catalytic activity">
    <reaction evidence="1">
        <text>a 4-saturated-(3S)-3-hydroxyacyl-CoA = a (3E)-enoyl-CoA + H2O</text>
        <dbReference type="Rhea" id="RHEA:20724"/>
        <dbReference type="ChEBI" id="CHEBI:15377"/>
        <dbReference type="ChEBI" id="CHEBI:58521"/>
        <dbReference type="ChEBI" id="CHEBI:137480"/>
        <dbReference type="EC" id="4.2.1.17"/>
    </reaction>
</comment>
<comment type="catalytic activity">
    <reaction evidence="1">
        <text>a (3S)-3-hydroxyacyl-CoA + NAD(+) = a 3-oxoacyl-CoA + NADH + H(+)</text>
        <dbReference type="Rhea" id="RHEA:22432"/>
        <dbReference type="ChEBI" id="CHEBI:15378"/>
        <dbReference type="ChEBI" id="CHEBI:57318"/>
        <dbReference type="ChEBI" id="CHEBI:57540"/>
        <dbReference type="ChEBI" id="CHEBI:57945"/>
        <dbReference type="ChEBI" id="CHEBI:90726"/>
        <dbReference type="EC" id="1.1.1.35"/>
    </reaction>
</comment>
<comment type="catalytic activity">
    <reaction evidence="1">
        <text>(3S)-3-hydroxybutanoyl-CoA = (3R)-3-hydroxybutanoyl-CoA</text>
        <dbReference type="Rhea" id="RHEA:21760"/>
        <dbReference type="ChEBI" id="CHEBI:57315"/>
        <dbReference type="ChEBI" id="CHEBI:57316"/>
        <dbReference type="EC" id="5.1.2.3"/>
    </reaction>
</comment>
<comment type="pathway">
    <text evidence="1">Lipid metabolism; fatty acid beta-oxidation.</text>
</comment>
<comment type="subunit">
    <text evidence="1">Heterotetramer of two alpha chains (FadJ) and two beta chains (FadI).</text>
</comment>
<comment type="subcellular location">
    <subcellularLocation>
        <location evidence="1">Cytoplasm</location>
    </subcellularLocation>
</comment>
<comment type="similarity">
    <text evidence="1">In the N-terminal section; belongs to the enoyl-CoA hydratase/isomerase family.</text>
</comment>
<comment type="similarity">
    <text evidence="1">In the central section; belongs to the 3-hydroxyacyl-CoA dehydrogenase family.</text>
</comment>
<reference key="1">
    <citation type="submission" date="2006-09" db="EMBL/GenBank/DDBJ databases">
        <authorList>
            <consortium name="The Klebsiella pneumonia Genome Sequencing Project"/>
            <person name="McClelland M."/>
            <person name="Sanderson E.K."/>
            <person name="Spieth J."/>
            <person name="Clifton W.S."/>
            <person name="Latreille P."/>
            <person name="Sabo A."/>
            <person name="Pepin K."/>
            <person name="Bhonagiri V."/>
            <person name="Porwollik S."/>
            <person name="Ali J."/>
            <person name="Wilson R.K."/>
        </authorList>
    </citation>
    <scope>NUCLEOTIDE SEQUENCE [LARGE SCALE GENOMIC DNA]</scope>
    <source>
        <strain>ATCC 700721 / MGH 78578</strain>
    </source>
</reference>
<name>FADJ_KLEP7</name>
<dbReference type="EC" id="4.2.1.17" evidence="1"/>
<dbReference type="EC" id="5.1.2.3" evidence="1"/>
<dbReference type="EC" id="1.1.1.35" evidence="1"/>
<dbReference type="EMBL" id="CP000647">
    <property type="protein sequence ID" value="ABR78140.1"/>
    <property type="molecule type" value="Genomic_DNA"/>
</dbReference>
<dbReference type="RefSeq" id="WP_015958773.1">
    <property type="nucleotide sequence ID" value="NC_009648.1"/>
</dbReference>
<dbReference type="SMR" id="A6TC19"/>
<dbReference type="STRING" id="272620.KPN_02723"/>
<dbReference type="PaxDb" id="272620-KPN_02723"/>
<dbReference type="EnsemblBacteria" id="ABR78140">
    <property type="protein sequence ID" value="ABR78140"/>
    <property type="gene ID" value="KPN_02723"/>
</dbReference>
<dbReference type="KEGG" id="kpn:KPN_02723"/>
<dbReference type="HOGENOM" id="CLU_009834_16_1_6"/>
<dbReference type="UniPathway" id="UPA00659"/>
<dbReference type="Proteomes" id="UP000000265">
    <property type="component" value="Chromosome"/>
</dbReference>
<dbReference type="GO" id="GO:0005737">
    <property type="term" value="C:cytoplasm"/>
    <property type="evidence" value="ECO:0007669"/>
    <property type="project" value="UniProtKB-SubCell"/>
</dbReference>
<dbReference type="GO" id="GO:0008692">
    <property type="term" value="F:3-hydroxybutyryl-CoA epimerase activity"/>
    <property type="evidence" value="ECO:0007669"/>
    <property type="project" value="UniProtKB-UniRule"/>
</dbReference>
<dbReference type="GO" id="GO:0004300">
    <property type="term" value="F:enoyl-CoA hydratase activity"/>
    <property type="evidence" value="ECO:0007669"/>
    <property type="project" value="UniProtKB-UniRule"/>
</dbReference>
<dbReference type="GO" id="GO:0016509">
    <property type="term" value="F:long-chain-3-hydroxyacyl-CoA dehydrogenase activity"/>
    <property type="evidence" value="ECO:0007669"/>
    <property type="project" value="TreeGrafter"/>
</dbReference>
<dbReference type="GO" id="GO:0070403">
    <property type="term" value="F:NAD+ binding"/>
    <property type="evidence" value="ECO:0007669"/>
    <property type="project" value="InterPro"/>
</dbReference>
<dbReference type="GO" id="GO:0006635">
    <property type="term" value="P:fatty acid beta-oxidation"/>
    <property type="evidence" value="ECO:0007669"/>
    <property type="project" value="UniProtKB-UniRule"/>
</dbReference>
<dbReference type="CDD" id="cd06558">
    <property type="entry name" value="crotonase-like"/>
    <property type="match status" value="1"/>
</dbReference>
<dbReference type="FunFam" id="1.10.1040.50:FF:000003">
    <property type="entry name" value="Fatty acid oxidation complex subunit alpha"/>
    <property type="match status" value="1"/>
</dbReference>
<dbReference type="FunFam" id="3.90.226.10:FF:000011">
    <property type="entry name" value="Fatty acid oxidation complex subunit alpha"/>
    <property type="match status" value="1"/>
</dbReference>
<dbReference type="FunFam" id="3.40.50.720:FF:000009">
    <property type="entry name" value="Fatty oxidation complex, alpha subunit"/>
    <property type="match status" value="1"/>
</dbReference>
<dbReference type="Gene3D" id="1.10.1040.50">
    <property type="match status" value="1"/>
</dbReference>
<dbReference type="Gene3D" id="3.90.226.10">
    <property type="entry name" value="2-enoyl-CoA Hydratase, Chain A, domain 1"/>
    <property type="match status" value="1"/>
</dbReference>
<dbReference type="Gene3D" id="3.40.50.720">
    <property type="entry name" value="NAD(P)-binding Rossmann-like Domain"/>
    <property type="match status" value="1"/>
</dbReference>
<dbReference type="HAMAP" id="MF_01617">
    <property type="entry name" value="FadJ"/>
    <property type="match status" value="1"/>
</dbReference>
<dbReference type="InterPro" id="IPR006180">
    <property type="entry name" value="3-OHacyl-CoA_DH_CS"/>
</dbReference>
<dbReference type="InterPro" id="IPR006176">
    <property type="entry name" value="3-OHacyl-CoA_DH_NAD-bd"/>
</dbReference>
<dbReference type="InterPro" id="IPR006108">
    <property type="entry name" value="3HC_DH_C"/>
</dbReference>
<dbReference type="InterPro" id="IPR008927">
    <property type="entry name" value="6-PGluconate_DH-like_C_sf"/>
</dbReference>
<dbReference type="InterPro" id="IPR029045">
    <property type="entry name" value="ClpP/crotonase-like_dom_sf"/>
</dbReference>
<dbReference type="InterPro" id="IPR001753">
    <property type="entry name" value="Enoyl-CoA_hydra/iso"/>
</dbReference>
<dbReference type="InterPro" id="IPR050136">
    <property type="entry name" value="FA_oxidation_alpha_subunit"/>
</dbReference>
<dbReference type="InterPro" id="IPR012802">
    <property type="entry name" value="FadJ"/>
</dbReference>
<dbReference type="InterPro" id="IPR036291">
    <property type="entry name" value="NAD(P)-bd_dom_sf"/>
</dbReference>
<dbReference type="NCBIfam" id="TIGR02440">
    <property type="entry name" value="FadJ"/>
    <property type="match status" value="1"/>
</dbReference>
<dbReference type="NCBIfam" id="NF008363">
    <property type="entry name" value="PRK11154.1"/>
    <property type="match status" value="1"/>
</dbReference>
<dbReference type="PANTHER" id="PTHR43612">
    <property type="entry name" value="TRIFUNCTIONAL ENZYME SUBUNIT ALPHA"/>
    <property type="match status" value="1"/>
</dbReference>
<dbReference type="PANTHER" id="PTHR43612:SF3">
    <property type="entry name" value="TRIFUNCTIONAL ENZYME SUBUNIT ALPHA, MITOCHONDRIAL"/>
    <property type="match status" value="1"/>
</dbReference>
<dbReference type="Pfam" id="PF00725">
    <property type="entry name" value="3HCDH"/>
    <property type="match status" value="2"/>
</dbReference>
<dbReference type="Pfam" id="PF02737">
    <property type="entry name" value="3HCDH_N"/>
    <property type="match status" value="1"/>
</dbReference>
<dbReference type="Pfam" id="PF00378">
    <property type="entry name" value="ECH_1"/>
    <property type="match status" value="1"/>
</dbReference>
<dbReference type="SUPFAM" id="SSF48179">
    <property type="entry name" value="6-phosphogluconate dehydrogenase C-terminal domain-like"/>
    <property type="match status" value="2"/>
</dbReference>
<dbReference type="SUPFAM" id="SSF52096">
    <property type="entry name" value="ClpP/crotonase"/>
    <property type="match status" value="1"/>
</dbReference>
<dbReference type="SUPFAM" id="SSF51735">
    <property type="entry name" value="NAD(P)-binding Rossmann-fold domains"/>
    <property type="match status" value="1"/>
</dbReference>
<dbReference type="PROSITE" id="PS00067">
    <property type="entry name" value="3HCDH"/>
    <property type="match status" value="1"/>
</dbReference>
<protein>
    <recommendedName>
        <fullName evidence="1">Fatty acid oxidation complex subunit alpha</fullName>
    </recommendedName>
    <domain>
        <recommendedName>
            <fullName evidence="1">Enoyl-CoA hydratase/3-hydroxybutyryl-CoA epimerase</fullName>
            <ecNumber evidence="1">4.2.1.17</ecNumber>
            <ecNumber evidence="1">5.1.2.3</ecNumber>
        </recommendedName>
    </domain>
    <domain>
        <recommendedName>
            <fullName evidence="1">3-hydroxyacyl-CoA dehydrogenase</fullName>
            <ecNumber evidence="1">1.1.1.35</ecNumber>
        </recommendedName>
    </domain>
</protein>
<sequence length="714" mass="77425">MDTVSAFKLEVRADKIAVITIDAPGEKMNTLKAEFGSQVRGLIRQLRDDKSVRGVVFISAKADNFIAGADINMIARCRSAQEAEALARQGQQIMAEIHGLSIPVIAAIHGACLGGGLELALACHGRICSDDEKTRLGLPEVQLGLLPGSGGTQRLPRLIGVSTALDMMLTGKQLRPRQALKAGLVDEVVPQAILLQAAVELALKGRPTSREVPVRERVLAGPLGRHLLFQFVGKQTQRKTQGNYPAVKRILQVVENGLAHGCSSGYAEEARAFGELAMSPQSQALRSIFFASTDLKKDPGAEAGPGSLRSVAVLGGGLMGGGIAYVTACKGGLPVRIKDIQPRGINHALKYSWDLLNKQVRQRRLRPVERDRQMALISGTTDYQGFAHRDVVIEAVFEDLALKQRMVSEVEQYGGPQTIFASNTSSLPIGDIAAHASRPGQVIGLHFFSPVEKMPLVEMIPHKGTDPQTIATVVQLAKRQGKTPIVVADKAGFYVNRILAPYINEAMRLLVEGEPIEVIDNALVKFGFPVGPIQLLDEVGIDTGTKIIPVLESAFGERFSPPANIIDAILKDDRKGRKNNRGFYLYETKGRKSKKRPDPAVYPLLGIGRPQSRLSAQQVAERCVMMMLNEAARCFDEQIIRSARDGDIGAVFGIGFPPFLGGPFRYMDTIGAGEVAAILQRLAAQFGPRFTPCDTLLRMAEQGTTFWPADERLT</sequence>
<organism>
    <name type="scientific">Klebsiella pneumoniae subsp. pneumoniae (strain ATCC 700721 / MGH 78578)</name>
    <dbReference type="NCBI Taxonomy" id="272620"/>
    <lineage>
        <taxon>Bacteria</taxon>
        <taxon>Pseudomonadati</taxon>
        <taxon>Pseudomonadota</taxon>
        <taxon>Gammaproteobacteria</taxon>
        <taxon>Enterobacterales</taxon>
        <taxon>Enterobacteriaceae</taxon>
        <taxon>Klebsiella/Raoultella group</taxon>
        <taxon>Klebsiella</taxon>
        <taxon>Klebsiella pneumoniae complex</taxon>
    </lineage>
</organism>
<proteinExistence type="inferred from homology"/>
<feature type="chain" id="PRO_1000069488" description="Fatty acid oxidation complex subunit alpha">
    <location>
        <begin position="1"/>
        <end position="714"/>
    </location>
</feature>
<feature type="region of interest" description="Enoyl-CoA hydratase" evidence="1">
    <location>
        <begin position="1"/>
        <end position="190"/>
    </location>
</feature>
<feature type="region of interest" description="3-hydroxyacyl-CoA dehydrogenase" evidence="1">
    <location>
        <begin position="306"/>
        <end position="714"/>
    </location>
</feature>
<feature type="site" description="Important for catalytic activity" evidence="1">
    <location>
        <position position="118"/>
    </location>
</feature>
<feature type="site" description="Important for catalytic activity" evidence="1">
    <location>
        <position position="140"/>
    </location>
</feature>
<evidence type="ECO:0000255" key="1">
    <source>
        <dbReference type="HAMAP-Rule" id="MF_01617"/>
    </source>
</evidence>
<accession>A6TC19</accession>
<gene>
    <name evidence="1" type="primary">fadJ</name>
    <name type="ordered locus">KPN78578_26790</name>
    <name type="ORF">KPN_02723</name>
</gene>
<keyword id="KW-0963">Cytoplasm</keyword>
<keyword id="KW-0276">Fatty acid metabolism</keyword>
<keyword id="KW-0413">Isomerase</keyword>
<keyword id="KW-0442">Lipid degradation</keyword>
<keyword id="KW-0443">Lipid metabolism</keyword>
<keyword id="KW-0456">Lyase</keyword>
<keyword id="KW-0511">Multifunctional enzyme</keyword>
<keyword id="KW-0520">NAD</keyword>
<keyword id="KW-0560">Oxidoreductase</keyword>